<evidence type="ECO:0000255" key="1">
    <source>
        <dbReference type="HAMAP-Rule" id="MF_01162"/>
    </source>
</evidence>
<comment type="function">
    <text evidence="1">Plays a role in lysophospholipid acylation. Transfers fatty acids to the 1-position via an enzyme-bound acyl-ACP intermediate in the presence of ATP and magnesium. Its physiological function is to regenerate phosphatidylethanolamine from 2-acyl-glycero-3-phosphoethanolamine (2-acyl-GPE) formed by transacylation reactions or degradation by phospholipase A1.</text>
</comment>
<comment type="catalytic activity">
    <reaction evidence="1">
        <text>a 2-acyl-sn-glycero-3-phosphoethanolamine + a fatty acyl-[ACP] = a 1,2-diacyl-sn-glycero-3-phosphoethanolamine + holo-[ACP]</text>
        <dbReference type="Rhea" id="RHEA:10304"/>
        <dbReference type="Rhea" id="RHEA-COMP:9685"/>
        <dbReference type="Rhea" id="RHEA-COMP:14125"/>
        <dbReference type="ChEBI" id="CHEBI:64479"/>
        <dbReference type="ChEBI" id="CHEBI:64612"/>
        <dbReference type="ChEBI" id="CHEBI:65213"/>
        <dbReference type="ChEBI" id="CHEBI:138651"/>
        <dbReference type="EC" id="2.3.1.40"/>
    </reaction>
</comment>
<comment type="catalytic activity">
    <reaction evidence="1">
        <text>a long-chain fatty acid + holo-[ACP] + ATP = a long-chain fatty acyl-[ACP] + AMP + diphosphate</text>
        <dbReference type="Rhea" id="RHEA:45588"/>
        <dbReference type="Rhea" id="RHEA-COMP:9685"/>
        <dbReference type="Rhea" id="RHEA-COMP:12682"/>
        <dbReference type="ChEBI" id="CHEBI:30616"/>
        <dbReference type="ChEBI" id="CHEBI:33019"/>
        <dbReference type="ChEBI" id="CHEBI:57560"/>
        <dbReference type="ChEBI" id="CHEBI:64479"/>
        <dbReference type="ChEBI" id="CHEBI:133243"/>
        <dbReference type="ChEBI" id="CHEBI:456215"/>
        <dbReference type="EC" id="6.2.1.20"/>
    </reaction>
</comment>
<comment type="subcellular location">
    <subcellularLocation>
        <location evidence="1">Cell inner membrane</location>
        <topology evidence="1">Multi-pass membrane protein</topology>
    </subcellularLocation>
</comment>
<comment type="similarity">
    <text evidence="1">In the N-terminal section; belongs to the 2-acyl-GPE acetyltransferase family.</text>
</comment>
<comment type="similarity">
    <text evidence="1">In the C-terminal section; belongs to the ATP-dependent AMP-binding enzyme family.</text>
</comment>
<reference key="1">
    <citation type="journal article" date="2010" name="J. Bacteriol.">
        <title>Genome sequence of the deep-rooted Yersinia pestis strain Angola reveals new insights into the evolution and pangenome of the plague bacterium.</title>
        <authorList>
            <person name="Eppinger M."/>
            <person name="Worsham P.L."/>
            <person name="Nikolich M.P."/>
            <person name="Riley D.R."/>
            <person name="Sebastian Y."/>
            <person name="Mou S."/>
            <person name="Achtman M."/>
            <person name="Lindler L.E."/>
            <person name="Ravel J."/>
        </authorList>
    </citation>
    <scope>NUCLEOTIDE SEQUENCE [LARGE SCALE GENOMIC DNA]</scope>
    <source>
        <strain>Angola</strain>
    </source>
</reference>
<accession>A9R2S1</accession>
<organism>
    <name type="scientific">Yersinia pestis bv. Antiqua (strain Angola)</name>
    <dbReference type="NCBI Taxonomy" id="349746"/>
    <lineage>
        <taxon>Bacteria</taxon>
        <taxon>Pseudomonadati</taxon>
        <taxon>Pseudomonadota</taxon>
        <taxon>Gammaproteobacteria</taxon>
        <taxon>Enterobacterales</taxon>
        <taxon>Yersiniaceae</taxon>
        <taxon>Yersinia</taxon>
    </lineage>
</organism>
<gene>
    <name evidence="1" type="primary">aas</name>
    <name type="ordered locus">YpAngola_A3246</name>
</gene>
<sequence length="718" mass="79445">MAYRLLRALFRGLFRVTIDGVTDQFKHEKLIITPNHVSFLDGALLALFLPIKPVFAVYTSITDTWYMRWLKPYVDFVALDPTNPMAIKHLVRMVEQGRPVVIFPEGRITVTGSLMKIYDGAAFVAAKSGAAVVPIRLDGPEFTHFGRLQGVLKTRWFPKISIHVLPATTIPMPQAPRSRERRVLAGEHLHTIMMAARMATVPRETLFEALLSAQTRYGRFKPCIEDVSFKEDSYQTLLKKTLGVSRILQRFTVPGEHVGMLLPNATITAAAIFGASLRGRIPALLNYTSGAKGLQSAIIAASLKTIVTSRQFLEKGKLTHLPEQVNEVNWVYLEDLKDTVTLTDKLWILFHLCFPRRAMLPQQADDSALILFTSGSEGNPKGVVHSHASLLANVEQIRTIADFTPRDRFMSSLPLFHAFGLTVGLFTPLMTGSRVFLYPSPLHYRVVPELVYDRNCTVLFGTSTFLGNYARFAHPYDFARVRYVVAGAEKLAESTKQIWQDKFGIRILEGYGVTECAPVVAINVPMAAKVNTVGRILPGMEARLINVPGIAQGGRLQLRGPNIMRGYLRVENPGVLEQPSAENAQGELDANWYDTGDIVTLDEQGFCAIRGRVKRFAKLAGEMVSLESVEQLAISLSPEGQHAAAAKTDSAKGEALVLFTTDSEITRERLIKVARENGVPELAVPRDIRVVKALPLLGSGKPDFVTLGKMAQDPEMSV</sequence>
<keyword id="KW-0012">Acyltransferase</keyword>
<keyword id="KW-0067">ATP-binding</keyword>
<keyword id="KW-0997">Cell inner membrane</keyword>
<keyword id="KW-1003">Cell membrane</keyword>
<keyword id="KW-0436">Ligase</keyword>
<keyword id="KW-0472">Membrane</keyword>
<keyword id="KW-0511">Multifunctional enzyme</keyword>
<keyword id="KW-0547">Nucleotide-binding</keyword>
<keyword id="KW-0808">Transferase</keyword>
<keyword id="KW-0812">Transmembrane</keyword>
<keyword id="KW-1133">Transmembrane helix</keyword>
<protein>
    <recommendedName>
        <fullName evidence="1">Bifunctional protein Aas</fullName>
    </recommendedName>
    <domain>
        <recommendedName>
            <fullName evidence="1">2-acylglycerophosphoethanolamine acyltransferase</fullName>
            <ecNumber evidence="1">2.3.1.40</ecNumber>
        </recommendedName>
        <alternativeName>
            <fullName evidence="1">2-acyl-GPE acyltransferase</fullName>
        </alternativeName>
        <alternativeName>
            <fullName evidence="1">Acyl-[acyl-carrier-protein]--phospholipid O-acyltransferase</fullName>
        </alternativeName>
    </domain>
    <domain>
        <recommendedName>
            <fullName evidence="1">Acyl-[acyl-carrier-protein] synthetase</fullName>
            <ecNumber evidence="1">6.2.1.20</ecNumber>
        </recommendedName>
        <alternativeName>
            <fullName evidence="1">Acyl-ACP synthetase</fullName>
        </alternativeName>
        <alternativeName>
            <fullName evidence="1">Long-chain-fatty-acid--[acyl-carrier-protein] ligase</fullName>
        </alternativeName>
    </domain>
</protein>
<proteinExistence type="inferred from homology"/>
<feature type="chain" id="PRO_1000137905" description="Bifunctional protein Aas">
    <location>
        <begin position="1"/>
        <end position="718"/>
    </location>
</feature>
<feature type="transmembrane region" description="Helical" evidence="1">
    <location>
        <begin position="258"/>
        <end position="277"/>
    </location>
</feature>
<feature type="transmembrane region" description="Helical" evidence="1">
    <location>
        <begin position="409"/>
        <end position="433"/>
    </location>
</feature>
<feature type="region of interest" description="Acyltransferase">
    <location>
        <begin position="15"/>
        <end position="138"/>
    </location>
</feature>
<feature type="region of interest" description="AMP-binding">
    <location>
        <begin position="233"/>
        <end position="646"/>
    </location>
</feature>
<feature type="active site" evidence="1">
    <location>
        <position position="36"/>
    </location>
</feature>
<name>AAS_YERPG</name>
<dbReference type="EC" id="2.3.1.40" evidence="1"/>
<dbReference type="EC" id="6.2.1.20" evidence="1"/>
<dbReference type="EMBL" id="CP000901">
    <property type="protein sequence ID" value="ABX88259.1"/>
    <property type="molecule type" value="Genomic_DNA"/>
</dbReference>
<dbReference type="RefSeq" id="WP_002230664.1">
    <property type="nucleotide sequence ID" value="NZ_CP009935.1"/>
</dbReference>
<dbReference type="SMR" id="A9R2S1"/>
<dbReference type="KEGG" id="ypg:YpAngola_A3246"/>
<dbReference type="PATRIC" id="fig|349746.12.peg.4311"/>
<dbReference type="GO" id="GO:0005886">
    <property type="term" value="C:plasma membrane"/>
    <property type="evidence" value="ECO:0007669"/>
    <property type="project" value="UniProtKB-SubCell"/>
</dbReference>
<dbReference type="GO" id="GO:0008779">
    <property type="term" value="F:acyl-[acyl-carrier-protein]-phospholipid O-acyltransferase activity"/>
    <property type="evidence" value="ECO:0007669"/>
    <property type="project" value="UniProtKB-UniRule"/>
</dbReference>
<dbReference type="GO" id="GO:0005524">
    <property type="term" value="F:ATP binding"/>
    <property type="evidence" value="ECO:0007669"/>
    <property type="project" value="UniProtKB-KW"/>
</dbReference>
<dbReference type="GO" id="GO:0008922">
    <property type="term" value="F:long-chain fatty acid [acyl-carrier-protein] ligase activity"/>
    <property type="evidence" value="ECO:0007669"/>
    <property type="project" value="UniProtKB-UniRule"/>
</dbReference>
<dbReference type="GO" id="GO:0031956">
    <property type="term" value="F:medium-chain fatty acid-CoA ligase activity"/>
    <property type="evidence" value="ECO:0007669"/>
    <property type="project" value="TreeGrafter"/>
</dbReference>
<dbReference type="GO" id="GO:0006631">
    <property type="term" value="P:fatty acid metabolic process"/>
    <property type="evidence" value="ECO:0007669"/>
    <property type="project" value="InterPro"/>
</dbReference>
<dbReference type="GO" id="GO:0008654">
    <property type="term" value="P:phospholipid biosynthetic process"/>
    <property type="evidence" value="ECO:0007669"/>
    <property type="project" value="InterPro"/>
</dbReference>
<dbReference type="CDD" id="cd07989">
    <property type="entry name" value="LPLAT_AGPAT-like"/>
    <property type="match status" value="1"/>
</dbReference>
<dbReference type="Gene3D" id="3.30.300.30">
    <property type="match status" value="1"/>
</dbReference>
<dbReference type="Gene3D" id="3.40.50.12780">
    <property type="entry name" value="N-terminal domain of ligase-like"/>
    <property type="match status" value="1"/>
</dbReference>
<dbReference type="HAMAP" id="MF_01162">
    <property type="entry name" value="Aas"/>
    <property type="match status" value="1"/>
</dbReference>
<dbReference type="InterPro" id="IPR023775">
    <property type="entry name" value="Aas"/>
</dbReference>
<dbReference type="InterPro" id="IPR025110">
    <property type="entry name" value="AMP-bd_C"/>
</dbReference>
<dbReference type="InterPro" id="IPR045851">
    <property type="entry name" value="AMP-bd_C_sf"/>
</dbReference>
<dbReference type="InterPro" id="IPR020845">
    <property type="entry name" value="AMP-binding_CS"/>
</dbReference>
<dbReference type="InterPro" id="IPR000873">
    <property type="entry name" value="AMP-dep_synth/lig_dom"/>
</dbReference>
<dbReference type="InterPro" id="IPR042099">
    <property type="entry name" value="ANL_N_sf"/>
</dbReference>
<dbReference type="InterPro" id="IPR002123">
    <property type="entry name" value="Plipid/glycerol_acylTrfase"/>
</dbReference>
<dbReference type="NCBIfam" id="NF005959">
    <property type="entry name" value="PRK08043.1"/>
    <property type="match status" value="1"/>
</dbReference>
<dbReference type="PANTHER" id="PTHR43201">
    <property type="entry name" value="ACYL-COA SYNTHETASE"/>
    <property type="match status" value="1"/>
</dbReference>
<dbReference type="PANTHER" id="PTHR43201:SF5">
    <property type="entry name" value="MEDIUM-CHAIN ACYL-COA LIGASE ACSF2, MITOCHONDRIAL"/>
    <property type="match status" value="1"/>
</dbReference>
<dbReference type="Pfam" id="PF01553">
    <property type="entry name" value="Acyltransferase"/>
    <property type="match status" value="1"/>
</dbReference>
<dbReference type="Pfam" id="PF00501">
    <property type="entry name" value="AMP-binding"/>
    <property type="match status" value="1"/>
</dbReference>
<dbReference type="Pfam" id="PF13193">
    <property type="entry name" value="AMP-binding_C"/>
    <property type="match status" value="1"/>
</dbReference>
<dbReference type="SMART" id="SM00563">
    <property type="entry name" value="PlsC"/>
    <property type="match status" value="1"/>
</dbReference>
<dbReference type="SUPFAM" id="SSF56801">
    <property type="entry name" value="Acetyl-CoA synthetase-like"/>
    <property type="match status" value="1"/>
</dbReference>
<dbReference type="SUPFAM" id="SSF69593">
    <property type="entry name" value="Glycerol-3-phosphate (1)-acyltransferase"/>
    <property type="match status" value="1"/>
</dbReference>
<dbReference type="PROSITE" id="PS00455">
    <property type="entry name" value="AMP_BINDING"/>
    <property type="match status" value="1"/>
</dbReference>